<proteinExistence type="inferred from homology"/>
<evidence type="ECO:0000255" key="1">
    <source>
        <dbReference type="HAMAP-Rule" id="MF_00291"/>
    </source>
</evidence>
<evidence type="ECO:0000256" key="2">
    <source>
        <dbReference type="SAM" id="MobiDB-lite"/>
    </source>
</evidence>
<evidence type="ECO:0000305" key="3"/>
<name>RS2_STAA1</name>
<dbReference type="EMBL" id="AP009324">
    <property type="protein sequence ID" value="BAF78129.1"/>
    <property type="molecule type" value="Genomic_DNA"/>
</dbReference>
<dbReference type="RefSeq" id="WP_000268484.1">
    <property type="nucleotide sequence ID" value="NZ_CTYB01000004.1"/>
</dbReference>
<dbReference type="SMR" id="A7X1N3"/>
<dbReference type="GeneID" id="98345571"/>
<dbReference type="KEGG" id="saw:SAHV_1246"/>
<dbReference type="HOGENOM" id="CLU_040318_1_2_9"/>
<dbReference type="GO" id="GO:0022627">
    <property type="term" value="C:cytosolic small ribosomal subunit"/>
    <property type="evidence" value="ECO:0007669"/>
    <property type="project" value="TreeGrafter"/>
</dbReference>
<dbReference type="GO" id="GO:0003735">
    <property type="term" value="F:structural constituent of ribosome"/>
    <property type="evidence" value="ECO:0007669"/>
    <property type="project" value="InterPro"/>
</dbReference>
<dbReference type="GO" id="GO:0006412">
    <property type="term" value="P:translation"/>
    <property type="evidence" value="ECO:0007669"/>
    <property type="project" value="UniProtKB-UniRule"/>
</dbReference>
<dbReference type="CDD" id="cd01425">
    <property type="entry name" value="RPS2"/>
    <property type="match status" value="1"/>
</dbReference>
<dbReference type="FunFam" id="1.10.287.610:FF:000001">
    <property type="entry name" value="30S ribosomal protein S2"/>
    <property type="match status" value="1"/>
</dbReference>
<dbReference type="Gene3D" id="3.40.50.10490">
    <property type="entry name" value="Glucose-6-phosphate isomerase like protein, domain 1"/>
    <property type="match status" value="1"/>
</dbReference>
<dbReference type="Gene3D" id="1.10.287.610">
    <property type="entry name" value="Helix hairpin bin"/>
    <property type="match status" value="1"/>
</dbReference>
<dbReference type="HAMAP" id="MF_00291_B">
    <property type="entry name" value="Ribosomal_uS2_B"/>
    <property type="match status" value="1"/>
</dbReference>
<dbReference type="InterPro" id="IPR001865">
    <property type="entry name" value="Ribosomal_uS2"/>
</dbReference>
<dbReference type="InterPro" id="IPR005706">
    <property type="entry name" value="Ribosomal_uS2_bac/mit/plastid"/>
</dbReference>
<dbReference type="InterPro" id="IPR018130">
    <property type="entry name" value="Ribosomal_uS2_CS"/>
</dbReference>
<dbReference type="InterPro" id="IPR023591">
    <property type="entry name" value="Ribosomal_uS2_flav_dom_sf"/>
</dbReference>
<dbReference type="NCBIfam" id="TIGR01011">
    <property type="entry name" value="rpsB_bact"/>
    <property type="match status" value="1"/>
</dbReference>
<dbReference type="PANTHER" id="PTHR12534">
    <property type="entry name" value="30S RIBOSOMAL PROTEIN S2 PROKARYOTIC AND ORGANELLAR"/>
    <property type="match status" value="1"/>
</dbReference>
<dbReference type="PANTHER" id="PTHR12534:SF0">
    <property type="entry name" value="SMALL RIBOSOMAL SUBUNIT PROTEIN US2M"/>
    <property type="match status" value="1"/>
</dbReference>
<dbReference type="Pfam" id="PF00318">
    <property type="entry name" value="Ribosomal_S2"/>
    <property type="match status" value="1"/>
</dbReference>
<dbReference type="PRINTS" id="PR00395">
    <property type="entry name" value="RIBOSOMALS2"/>
</dbReference>
<dbReference type="SUPFAM" id="SSF52313">
    <property type="entry name" value="Ribosomal protein S2"/>
    <property type="match status" value="1"/>
</dbReference>
<dbReference type="PROSITE" id="PS00962">
    <property type="entry name" value="RIBOSOMAL_S2_1"/>
    <property type="match status" value="1"/>
</dbReference>
<dbReference type="PROSITE" id="PS00963">
    <property type="entry name" value="RIBOSOMAL_S2_2"/>
    <property type="match status" value="1"/>
</dbReference>
<gene>
    <name evidence="1" type="primary">rpsB</name>
    <name type="ordered locus">SAHV_1246</name>
</gene>
<feature type="chain" id="PRO_1000004080" description="Small ribosomal subunit protein uS2">
    <location>
        <begin position="1"/>
        <end position="255"/>
    </location>
</feature>
<feature type="region of interest" description="Disordered" evidence="2">
    <location>
        <begin position="226"/>
        <end position="255"/>
    </location>
</feature>
<sequence>MAVISMKQLLEAGVHFGHQTRRWNPKMKKYIFTERNGIYIIDLQKTVKKVDEAYNFLKQVSEDGGQVLFVGTKKQAQESVKSEAERAGQFYINQRWLGGLLTNYKTISKRIKRISEIEKMEEDGLFEVLPKKEVVELKKEYDRLIKFLGGIRDMKSMPQALFVVDPRKERNAIAEARKLNIPIVGIVDTNCDPDEIDYVIPANDDAIRAVKLLTAKMADAILEGQQGVSNEEVAAEQNIDLDEKEKSEETEATEE</sequence>
<organism>
    <name type="scientific">Staphylococcus aureus (strain Mu3 / ATCC 700698)</name>
    <dbReference type="NCBI Taxonomy" id="418127"/>
    <lineage>
        <taxon>Bacteria</taxon>
        <taxon>Bacillati</taxon>
        <taxon>Bacillota</taxon>
        <taxon>Bacilli</taxon>
        <taxon>Bacillales</taxon>
        <taxon>Staphylococcaceae</taxon>
        <taxon>Staphylococcus</taxon>
    </lineage>
</organism>
<comment type="similarity">
    <text evidence="1">Belongs to the universal ribosomal protein uS2 family.</text>
</comment>
<protein>
    <recommendedName>
        <fullName evidence="1">Small ribosomal subunit protein uS2</fullName>
    </recommendedName>
    <alternativeName>
        <fullName evidence="3">30S ribosomal protein S2</fullName>
    </alternativeName>
</protein>
<accession>A7X1N3</accession>
<keyword id="KW-0687">Ribonucleoprotein</keyword>
<keyword id="KW-0689">Ribosomal protein</keyword>
<reference key="1">
    <citation type="journal article" date="2008" name="Antimicrob. Agents Chemother.">
        <title>Mutated response regulator graR is responsible for phenotypic conversion of Staphylococcus aureus from heterogeneous vancomycin-intermediate resistance to vancomycin-intermediate resistance.</title>
        <authorList>
            <person name="Neoh H.-M."/>
            <person name="Cui L."/>
            <person name="Yuzawa H."/>
            <person name="Takeuchi F."/>
            <person name="Matsuo M."/>
            <person name="Hiramatsu K."/>
        </authorList>
    </citation>
    <scope>NUCLEOTIDE SEQUENCE [LARGE SCALE GENOMIC DNA]</scope>
    <source>
        <strain>Mu3 / ATCC 700698</strain>
    </source>
</reference>